<protein>
    <recommendedName>
        <fullName evidence="4">Siroheme decarboxylase NirL subunit</fullName>
        <ecNumber evidence="1">4.1.1.111</ecNumber>
    </recommendedName>
</protein>
<comment type="function">
    <text evidence="1">Involved in heme d1 biosynthesis. Catalyzes the decarboxylation of siroheme into didecarboxysiroheme.</text>
</comment>
<comment type="catalytic activity">
    <reaction evidence="1">
        <text>siroheme + 2 H(+) = 12,18-didecarboxysiroheme + 2 CO2</text>
        <dbReference type="Rhea" id="RHEA:19093"/>
        <dbReference type="ChEBI" id="CHEBI:15378"/>
        <dbReference type="ChEBI" id="CHEBI:16526"/>
        <dbReference type="ChEBI" id="CHEBI:60052"/>
        <dbReference type="ChEBI" id="CHEBI:140497"/>
        <dbReference type="EC" id="4.1.1.111"/>
    </reaction>
</comment>
<comment type="pathway">
    <text evidence="1">Porphyrin-containing compound metabolism.</text>
</comment>
<comment type="subunit">
    <text evidence="1">Probably forms a complex composed of NirD, NirL, NirG and NirH. All proteins are required for the total conversion of siroheme to didecarboxysiroheme.</text>
</comment>
<comment type="disruption phenotype">
    <text evidence="2">Insertional mutagenesis results in the loss of respiratory nitrite reductase activity in vivo and in vitro. Mutant strains synthesize a periplasmic cytochrome cd1 that lacks heme d1.</text>
</comment>
<comment type="similarity">
    <text evidence="4">Belongs to the Ahb/Nir family.</text>
</comment>
<accession>Q52523</accession>
<organism>
    <name type="scientific">Stutzerimonas stutzeri</name>
    <name type="common">Pseudomonas stutzeri</name>
    <dbReference type="NCBI Taxonomy" id="316"/>
    <lineage>
        <taxon>Bacteria</taxon>
        <taxon>Pseudomonadati</taxon>
        <taxon>Pseudomonadota</taxon>
        <taxon>Gammaproteobacteria</taxon>
        <taxon>Pseudomonadales</taxon>
        <taxon>Pseudomonadaceae</taxon>
        <taxon>Stutzerimonas</taxon>
    </lineage>
</organism>
<reference key="1">
    <citation type="journal article" date="1995" name="Eur. J. Biochem.">
        <title>Resolution of the nirD locus for heme d1 synthesis of cytochrome cd1 (respiratory nitrite reductase) from Pseudomonas stutzeri.</title>
        <authorList>
            <person name="Palmedo G."/>
            <person name="Seither P."/>
            <person name="Koerner H."/>
            <person name="Matthews J.C."/>
            <person name="Burkhalter R.S."/>
            <person name="Timkovich R."/>
            <person name="Zumft W.G."/>
        </authorList>
    </citation>
    <scope>NUCLEOTIDE SEQUENCE [GENOMIC DNA]</scope>
    <scope>DISRUPTION PHENOTYPE</scope>
    <source>
        <strain>ATCC 14405 / JCM 20778 / CIP 107696 / IAM 12931 / LMG 2243 / NCIMB 568 / Baumann 218 / ZoBell 632</strain>
    </source>
</reference>
<sequence>MNSCLNELQAMQLRRLLETGLPLAARPYQRLAEQIGSVEEHVLQQIQRWQEEGLFRRVGLVLKHRALGFRANAMLVMDIPDAQVDEIGRRLGQAAGVNLCYQRPRRLPQWPYNLFCMVHGREREQVCQLIERLLADNGLSEVPHQLLFSTRAFKQCGGRFAPPLREVVNG</sequence>
<proteinExistence type="inferred from homology"/>
<gene>
    <name evidence="3" type="primary">nirL</name>
</gene>
<keyword id="KW-0456">Lyase</keyword>
<evidence type="ECO:0000250" key="1">
    <source>
        <dbReference type="UniProtKB" id="I6UH61"/>
    </source>
</evidence>
<evidence type="ECO:0000269" key="2">
    <source>
    </source>
</evidence>
<evidence type="ECO:0000303" key="3">
    <source>
    </source>
</evidence>
<evidence type="ECO:0000305" key="4"/>
<dbReference type="EC" id="4.1.1.111" evidence="1"/>
<dbReference type="EMBL" id="X53676">
    <property type="protein sequence ID" value="CAA90580.1"/>
    <property type="molecule type" value="Genomic_DNA"/>
</dbReference>
<dbReference type="PIR" id="S68352">
    <property type="entry name" value="S68352"/>
</dbReference>
<dbReference type="RefSeq" id="WP_003279934.1">
    <property type="nucleotide sequence ID" value="NZ_CP036186.1"/>
</dbReference>
<dbReference type="SMR" id="Q52523"/>
<dbReference type="GO" id="GO:0016829">
    <property type="term" value="F:lyase activity"/>
    <property type="evidence" value="ECO:0007669"/>
    <property type="project" value="UniProtKB-KW"/>
</dbReference>
<dbReference type="FunFam" id="3.30.70.3460:FF:000003">
    <property type="entry name" value="Heme d1 biosynthesis protein NirL"/>
    <property type="match status" value="1"/>
</dbReference>
<dbReference type="Gene3D" id="3.30.70.3460">
    <property type="match status" value="1"/>
</dbReference>
<dbReference type="InterPro" id="IPR040523">
    <property type="entry name" value="AsnC_trans_reg2"/>
</dbReference>
<dbReference type="InterPro" id="IPR050684">
    <property type="entry name" value="HTH-Siroheme_Decarb"/>
</dbReference>
<dbReference type="InterPro" id="IPR053953">
    <property type="entry name" value="NirdL-like_HTH"/>
</dbReference>
<dbReference type="PANTHER" id="PTHR43413:SF1">
    <property type="entry name" value="SIROHEME DECARBOXYLASE NIRL SUBUNIT"/>
    <property type="match status" value="1"/>
</dbReference>
<dbReference type="PANTHER" id="PTHR43413">
    <property type="entry name" value="TRANSCRIPTIONAL REGULATOR, ASNC FAMILY"/>
    <property type="match status" value="1"/>
</dbReference>
<dbReference type="Pfam" id="PF17805">
    <property type="entry name" value="AsnC_trans_reg2"/>
    <property type="match status" value="1"/>
</dbReference>
<dbReference type="Pfam" id="PF22451">
    <property type="entry name" value="NirdL-like_HTH"/>
    <property type="match status" value="1"/>
</dbReference>
<feature type="chain" id="PRO_0000096862" description="Siroheme decarboxylase NirL subunit">
    <location>
        <begin position="1"/>
        <end position="170"/>
    </location>
</feature>
<name>NIRL_STUST</name>